<reference key="1">
    <citation type="journal article" date="2002" name="Science">
        <title>The genome sequence of the malaria mosquito Anopheles gambiae.</title>
        <authorList>
            <person name="Holt R.A."/>
            <person name="Subramanian G.M."/>
            <person name="Halpern A."/>
            <person name="Sutton G.G."/>
            <person name="Charlab R."/>
            <person name="Nusskern D.R."/>
            <person name="Wincker P."/>
            <person name="Clark A.G."/>
            <person name="Ribeiro J.M.C."/>
            <person name="Wides R."/>
            <person name="Salzberg S.L."/>
            <person name="Loftus B.J."/>
            <person name="Yandell M.D."/>
            <person name="Majoros W.H."/>
            <person name="Rusch D.B."/>
            <person name="Lai Z."/>
            <person name="Kraft C.L."/>
            <person name="Abril J.F."/>
            <person name="Anthouard V."/>
            <person name="Arensburger P."/>
            <person name="Atkinson P.W."/>
            <person name="Baden H."/>
            <person name="de Berardinis V."/>
            <person name="Baldwin D."/>
            <person name="Benes V."/>
            <person name="Biedler J."/>
            <person name="Blass C."/>
            <person name="Bolanos R."/>
            <person name="Boscus D."/>
            <person name="Barnstead M."/>
            <person name="Cai S."/>
            <person name="Center A."/>
            <person name="Chaturverdi K."/>
            <person name="Christophides G.K."/>
            <person name="Chrystal M.A.M."/>
            <person name="Clamp M."/>
            <person name="Cravchik A."/>
            <person name="Curwen V."/>
            <person name="Dana A."/>
            <person name="Delcher A."/>
            <person name="Dew I."/>
            <person name="Evans C.A."/>
            <person name="Flanigan M."/>
            <person name="Grundschober-Freimoser A."/>
            <person name="Friedli L."/>
            <person name="Gu Z."/>
            <person name="Guan P."/>
            <person name="Guigo R."/>
            <person name="Hillenmeyer M.E."/>
            <person name="Hladun S.L."/>
            <person name="Hogan J.R."/>
            <person name="Hong Y.S."/>
            <person name="Hoover J."/>
            <person name="Jaillon O."/>
            <person name="Ke Z."/>
            <person name="Kodira C.D."/>
            <person name="Kokoza E."/>
            <person name="Koutsos A."/>
            <person name="Letunic I."/>
            <person name="Levitsky A.A."/>
            <person name="Liang Y."/>
            <person name="Lin J.-J."/>
            <person name="Lobo N.F."/>
            <person name="Lopez J.R."/>
            <person name="Malek J.A."/>
            <person name="McIntosh T.C."/>
            <person name="Meister S."/>
            <person name="Miller J.R."/>
            <person name="Mobarry C."/>
            <person name="Mongin E."/>
            <person name="Murphy S.D."/>
            <person name="O'Brochta D.A."/>
            <person name="Pfannkoch C."/>
            <person name="Qi R."/>
            <person name="Regier M.A."/>
            <person name="Remington K."/>
            <person name="Shao H."/>
            <person name="Sharakhova M.V."/>
            <person name="Sitter C.D."/>
            <person name="Shetty J."/>
            <person name="Smith T.J."/>
            <person name="Strong R."/>
            <person name="Sun J."/>
            <person name="Thomasova D."/>
            <person name="Ton L.Q."/>
            <person name="Topalis P."/>
            <person name="Tu Z.J."/>
            <person name="Unger M.F."/>
            <person name="Walenz B."/>
            <person name="Wang A.H."/>
            <person name="Wang J."/>
            <person name="Wang M."/>
            <person name="Wang X."/>
            <person name="Woodford K.J."/>
            <person name="Wortman J.R."/>
            <person name="Wu M."/>
            <person name="Yao A."/>
            <person name="Zdobnov E.M."/>
            <person name="Zhang H."/>
            <person name="Zhao Q."/>
            <person name="Zhao S."/>
            <person name="Zhu S.C."/>
            <person name="Zhimulev I."/>
            <person name="Coluzzi M."/>
            <person name="della Torre A."/>
            <person name="Roth C.W."/>
            <person name="Louis C."/>
            <person name="Kalush F."/>
            <person name="Mural R.J."/>
            <person name="Myers E.W."/>
            <person name="Adams M.D."/>
            <person name="Smith H.O."/>
            <person name="Broder S."/>
            <person name="Gardner M.J."/>
            <person name="Fraser C.M."/>
            <person name="Birney E."/>
            <person name="Bork P."/>
            <person name="Brey P.T."/>
            <person name="Venter J.C."/>
            <person name="Weissenbach J."/>
            <person name="Kafatos F.C."/>
            <person name="Collins F.H."/>
            <person name="Hoffman S.L."/>
        </authorList>
    </citation>
    <scope>NUCLEOTIDE SEQUENCE [LARGE SCALE GENOMIC DNA]</scope>
    <source>
        <strain>PEST</strain>
    </source>
</reference>
<protein>
    <recommendedName>
        <fullName evidence="1">Eukaryotic translation initiation factor 3 subunit J</fullName>
        <shortName evidence="1">eIF3j</shortName>
    </recommendedName>
</protein>
<keyword id="KW-0175">Coiled coil</keyword>
<keyword id="KW-0963">Cytoplasm</keyword>
<keyword id="KW-0396">Initiation factor</keyword>
<keyword id="KW-0648">Protein biosynthesis</keyword>
<keyword id="KW-1185">Reference proteome</keyword>
<dbReference type="EMBL" id="AAAB01008960">
    <property type="protein sequence ID" value="EAA10909.2"/>
    <property type="molecule type" value="Genomic_DNA"/>
</dbReference>
<dbReference type="RefSeq" id="XP_316642.2">
    <property type="nucleotide sequence ID" value="XM_316642.3"/>
</dbReference>
<dbReference type="SMR" id="Q7Q566"/>
<dbReference type="FunCoup" id="Q7Q566">
    <property type="interactions" value="1766"/>
</dbReference>
<dbReference type="STRING" id="7165.Q7Q566"/>
<dbReference type="PaxDb" id="7165-AGAP006613-PB"/>
<dbReference type="EnsemblMetazoa" id="AGAP006613-RB">
    <property type="protein sequence ID" value="AGAP006613-PB"/>
    <property type="gene ID" value="AGAP006613"/>
</dbReference>
<dbReference type="VEuPathDB" id="VectorBase:AGAMI1_008721"/>
<dbReference type="VEuPathDB" id="VectorBase:AGAP006613"/>
<dbReference type="eggNOG" id="KOG4813">
    <property type="taxonomic scope" value="Eukaryota"/>
</dbReference>
<dbReference type="HOGENOM" id="CLU_085806_2_0_1"/>
<dbReference type="InParanoid" id="Q7Q566"/>
<dbReference type="OMA" id="KPHYALW"/>
<dbReference type="PhylomeDB" id="Q7Q566"/>
<dbReference type="Proteomes" id="UP000007062">
    <property type="component" value="Chromosome 2L"/>
</dbReference>
<dbReference type="GO" id="GO:0016282">
    <property type="term" value="C:eukaryotic 43S preinitiation complex"/>
    <property type="evidence" value="ECO:0007669"/>
    <property type="project" value="UniProtKB-UniRule"/>
</dbReference>
<dbReference type="GO" id="GO:0033290">
    <property type="term" value="C:eukaryotic 48S preinitiation complex"/>
    <property type="evidence" value="ECO:0007669"/>
    <property type="project" value="UniProtKB-UniRule"/>
</dbReference>
<dbReference type="GO" id="GO:0005852">
    <property type="term" value="C:eukaryotic translation initiation factor 3 complex"/>
    <property type="evidence" value="ECO:0000318"/>
    <property type="project" value="GO_Central"/>
</dbReference>
<dbReference type="GO" id="GO:0003743">
    <property type="term" value="F:translation initiation factor activity"/>
    <property type="evidence" value="ECO:0007669"/>
    <property type="project" value="UniProtKB-UniRule"/>
</dbReference>
<dbReference type="GO" id="GO:0001732">
    <property type="term" value="P:formation of cytoplasmic translation initiation complex"/>
    <property type="evidence" value="ECO:0007669"/>
    <property type="project" value="UniProtKB-UniRule"/>
</dbReference>
<dbReference type="FunFam" id="1.10.246.60:FF:000005">
    <property type="entry name" value="Eukaryotic translation initiation factor 3 subunit J"/>
    <property type="match status" value="1"/>
</dbReference>
<dbReference type="Gene3D" id="1.10.246.60">
    <property type="entry name" value="Eukaryotic translation initiation factor 3 like domains"/>
    <property type="match status" value="1"/>
</dbReference>
<dbReference type="HAMAP" id="MF_03009">
    <property type="entry name" value="eIF3j"/>
    <property type="match status" value="1"/>
</dbReference>
<dbReference type="InterPro" id="IPR023194">
    <property type="entry name" value="eIF3-like_dom_sf"/>
</dbReference>
<dbReference type="InterPro" id="IPR013906">
    <property type="entry name" value="eIF3j"/>
</dbReference>
<dbReference type="PANTHER" id="PTHR21681">
    <property type="entry name" value="EUKARYOTIC TRANSLATION INITIATION FACTOR 3 SUBUNIT J"/>
    <property type="match status" value="1"/>
</dbReference>
<dbReference type="PANTHER" id="PTHR21681:SF0">
    <property type="entry name" value="EUKARYOTIC TRANSLATION INITIATION FACTOR 3 SUBUNIT J"/>
    <property type="match status" value="1"/>
</dbReference>
<dbReference type="Pfam" id="PF08597">
    <property type="entry name" value="eIF3_subunit"/>
    <property type="match status" value="1"/>
</dbReference>
<organism>
    <name type="scientific">Anopheles gambiae</name>
    <name type="common">African malaria mosquito</name>
    <dbReference type="NCBI Taxonomy" id="7165"/>
    <lineage>
        <taxon>Eukaryota</taxon>
        <taxon>Metazoa</taxon>
        <taxon>Ecdysozoa</taxon>
        <taxon>Arthropoda</taxon>
        <taxon>Hexapoda</taxon>
        <taxon>Insecta</taxon>
        <taxon>Pterygota</taxon>
        <taxon>Neoptera</taxon>
        <taxon>Endopterygota</taxon>
        <taxon>Diptera</taxon>
        <taxon>Nematocera</taxon>
        <taxon>Culicoidea</taxon>
        <taxon>Culicidae</taxon>
        <taxon>Anophelinae</taxon>
        <taxon>Anopheles</taxon>
    </lineage>
</organism>
<gene>
    <name type="ORF">AGAP006613</name>
</gene>
<proteinExistence type="inferred from homology"/>
<accession>Q7Q566</accession>
<name>EIF3J_ANOGA</name>
<feature type="chain" id="PRO_0000365129" description="Eukaryotic translation initiation factor 3 subunit J">
    <location>
        <begin position="1"/>
        <end position="240"/>
    </location>
</feature>
<feature type="region of interest" description="Disordered" evidence="2">
    <location>
        <begin position="19"/>
        <end position="95"/>
    </location>
</feature>
<feature type="coiled-coil region" evidence="1">
    <location>
        <begin position="63"/>
        <end position="90"/>
    </location>
</feature>
<feature type="coiled-coil region" evidence="1">
    <location>
        <begin position="176"/>
        <end position="235"/>
    </location>
</feature>
<feature type="compositionally biased region" description="Acidic residues" evidence="2">
    <location>
        <begin position="28"/>
        <end position="45"/>
    </location>
</feature>
<feature type="compositionally biased region" description="Basic and acidic residues" evidence="2">
    <location>
        <begin position="46"/>
        <end position="56"/>
    </location>
</feature>
<feature type="compositionally biased region" description="Basic residues" evidence="2">
    <location>
        <begin position="60"/>
        <end position="71"/>
    </location>
</feature>
<feature type="compositionally biased region" description="Basic and acidic residues" evidence="2">
    <location>
        <begin position="72"/>
        <end position="81"/>
    </location>
</feature>
<sequence>MEDDWEALAEQKAEQLFAKADVNKWAGEDEDDVKDNWEDDDEEEEKKDAPKQEDTPTKNAKPKKAAQQKKLKKEDLERLQREEEEFANMTPEQQLAEKRRLQKLQEENDLKTAMETLGITPMSTGNGIDGMHPTTKEEFTELAEAISKKLANYRASTEYQGFLEELLLKLFASLSSNNIRKAKTTLDNLYLEKQKVEKGDKPKKTKGIKVKAKLRVEGENTTLNEYETKYDDYDDYDDFM</sequence>
<comment type="function">
    <text evidence="1">Component of the eukaryotic translation initiation factor 3 (eIF-3) complex, which is involved in protein synthesis of a specialized repertoire of mRNAs and, together with other initiation factors, stimulates binding of mRNA and methionyl-tRNAi to the 40S ribosome. The eIF-3 complex specifically targets and initiates translation of a subset of mRNAs involved in cell proliferation.</text>
</comment>
<comment type="subunit">
    <text evidence="1">Component of the eukaryotic translation initiation factor 3 (eIF-3) complex.</text>
</comment>
<comment type="subcellular location">
    <subcellularLocation>
        <location evidence="1">Cytoplasm</location>
    </subcellularLocation>
</comment>
<comment type="similarity">
    <text evidence="1">Belongs to the eIF-3 subunit J family.</text>
</comment>
<evidence type="ECO:0000255" key="1">
    <source>
        <dbReference type="HAMAP-Rule" id="MF_03009"/>
    </source>
</evidence>
<evidence type="ECO:0000256" key="2">
    <source>
        <dbReference type="SAM" id="MobiDB-lite"/>
    </source>
</evidence>